<sequence>MSQFAILGFIALGGAFGACSRYLVSELCVVLLGRGFPYGTLTVNVVGSFIMGLLIAAFESELLATEPWRQIIGLGFLGALTTFSTFSMDNVLLMQQGAFFKMGLNVVLNVTLSITAAWVGFQLLKS</sequence>
<evidence type="ECO:0000255" key="1">
    <source>
        <dbReference type="HAMAP-Rule" id="MF_00454"/>
    </source>
</evidence>
<accession>Q8DDL3</accession>
<comment type="function">
    <text evidence="1">Fluoride-specific ion channel. Important for reducing fluoride concentration in the cell, thus reducing its toxicity.</text>
</comment>
<comment type="catalytic activity">
    <reaction evidence="1">
        <text>fluoride(in) = fluoride(out)</text>
        <dbReference type="Rhea" id="RHEA:76159"/>
        <dbReference type="ChEBI" id="CHEBI:17051"/>
    </reaction>
    <physiologicalReaction direction="left-to-right" evidence="1">
        <dbReference type="Rhea" id="RHEA:76160"/>
    </physiologicalReaction>
</comment>
<comment type="activity regulation">
    <text evidence="1">Na(+) is not transported, but it plays an essential structural role and its presence is essential for fluoride channel function.</text>
</comment>
<comment type="subcellular location">
    <subcellularLocation>
        <location evidence="1">Cell inner membrane</location>
        <topology evidence="1">Multi-pass membrane protein</topology>
    </subcellularLocation>
</comment>
<comment type="similarity">
    <text evidence="1">Belongs to the fluoride channel Fluc/FEX (TC 1.A.43) family.</text>
</comment>
<gene>
    <name evidence="1" type="primary">fluC</name>
    <name evidence="1" type="synonym">crcB</name>
    <name type="ordered locus">VV1_0965</name>
</gene>
<dbReference type="EMBL" id="AE016795">
    <property type="protein sequence ID" value="AAO09459.1"/>
    <property type="molecule type" value="Genomic_DNA"/>
</dbReference>
<dbReference type="RefSeq" id="WP_011079011.1">
    <property type="nucleotide sequence ID" value="NC_004459.3"/>
</dbReference>
<dbReference type="SMR" id="Q8DDL3"/>
<dbReference type="KEGG" id="vvu:VV1_0965"/>
<dbReference type="HOGENOM" id="CLU_114342_3_0_6"/>
<dbReference type="Proteomes" id="UP000002275">
    <property type="component" value="Chromosome 1"/>
</dbReference>
<dbReference type="GO" id="GO:0005886">
    <property type="term" value="C:plasma membrane"/>
    <property type="evidence" value="ECO:0007669"/>
    <property type="project" value="UniProtKB-SubCell"/>
</dbReference>
<dbReference type="GO" id="GO:0062054">
    <property type="term" value="F:fluoride channel activity"/>
    <property type="evidence" value="ECO:0007669"/>
    <property type="project" value="UniProtKB-UniRule"/>
</dbReference>
<dbReference type="GO" id="GO:0046872">
    <property type="term" value="F:metal ion binding"/>
    <property type="evidence" value="ECO:0007669"/>
    <property type="project" value="UniProtKB-KW"/>
</dbReference>
<dbReference type="GO" id="GO:0140114">
    <property type="term" value="P:cellular detoxification of fluoride"/>
    <property type="evidence" value="ECO:0007669"/>
    <property type="project" value="UniProtKB-UniRule"/>
</dbReference>
<dbReference type="HAMAP" id="MF_00454">
    <property type="entry name" value="FluC"/>
    <property type="match status" value="1"/>
</dbReference>
<dbReference type="InterPro" id="IPR003691">
    <property type="entry name" value="FluC"/>
</dbReference>
<dbReference type="NCBIfam" id="TIGR00494">
    <property type="entry name" value="crcB"/>
    <property type="match status" value="1"/>
</dbReference>
<dbReference type="NCBIfam" id="NF010796">
    <property type="entry name" value="PRK14200.1"/>
    <property type="match status" value="1"/>
</dbReference>
<dbReference type="PANTHER" id="PTHR28259">
    <property type="entry name" value="FLUORIDE EXPORT PROTEIN 1-RELATED"/>
    <property type="match status" value="1"/>
</dbReference>
<dbReference type="PANTHER" id="PTHR28259:SF1">
    <property type="entry name" value="FLUORIDE EXPORT PROTEIN 1-RELATED"/>
    <property type="match status" value="1"/>
</dbReference>
<dbReference type="Pfam" id="PF02537">
    <property type="entry name" value="CRCB"/>
    <property type="match status" value="1"/>
</dbReference>
<feature type="chain" id="PRO_0000110208" description="Fluoride-specific ion channel FluC">
    <location>
        <begin position="1"/>
        <end position="126"/>
    </location>
</feature>
<feature type="transmembrane region" description="Helical" evidence="1">
    <location>
        <begin position="4"/>
        <end position="24"/>
    </location>
</feature>
<feature type="transmembrane region" description="Helical" evidence="1">
    <location>
        <begin position="38"/>
        <end position="58"/>
    </location>
</feature>
<feature type="transmembrane region" description="Helical" evidence="1">
    <location>
        <begin position="71"/>
        <end position="91"/>
    </location>
</feature>
<feature type="transmembrane region" description="Helical" evidence="1">
    <location>
        <begin position="104"/>
        <end position="124"/>
    </location>
</feature>
<feature type="binding site" evidence="1">
    <location>
        <position position="78"/>
    </location>
    <ligand>
        <name>Na(+)</name>
        <dbReference type="ChEBI" id="CHEBI:29101"/>
        <note>structural</note>
    </ligand>
</feature>
<feature type="binding site" evidence="1">
    <location>
        <position position="81"/>
    </location>
    <ligand>
        <name>Na(+)</name>
        <dbReference type="ChEBI" id="CHEBI:29101"/>
        <note>structural</note>
    </ligand>
</feature>
<keyword id="KW-0997">Cell inner membrane</keyword>
<keyword id="KW-1003">Cell membrane</keyword>
<keyword id="KW-0407">Ion channel</keyword>
<keyword id="KW-0406">Ion transport</keyword>
<keyword id="KW-0472">Membrane</keyword>
<keyword id="KW-0479">Metal-binding</keyword>
<keyword id="KW-0915">Sodium</keyword>
<keyword id="KW-0812">Transmembrane</keyword>
<keyword id="KW-1133">Transmembrane helix</keyword>
<keyword id="KW-0813">Transport</keyword>
<organism>
    <name type="scientific">Vibrio vulnificus (strain CMCP6)</name>
    <dbReference type="NCBI Taxonomy" id="216895"/>
    <lineage>
        <taxon>Bacteria</taxon>
        <taxon>Pseudomonadati</taxon>
        <taxon>Pseudomonadota</taxon>
        <taxon>Gammaproteobacteria</taxon>
        <taxon>Vibrionales</taxon>
        <taxon>Vibrionaceae</taxon>
        <taxon>Vibrio</taxon>
    </lineage>
</organism>
<name>FLUC_VIBVU</name>
<proteinExistence type="inferred from homology"/>
<protein>
    <recommendedName>
        <fullName evidence="1">Fluoride-specific ion channel FluC</fullName>
    </recommendedName>
</protein>
<reference key="1">
    <citation type="submission" date="2002-12" db="EMBL/GenBank/DDBJ databases">
        <title>Complete genome sequence of Vibrio vulnificus CMCP6.</title>
        <authorList>
            <person name="Rhee J.H."/>
            <person name="Kim S.Y."/>
            <person name="Chung S.S."/>
            <person name="Kim J.J."/>
            <person name="Moon Y.H."/>
            <person name="Jeong H."/>
            <person name="Choy H.E."/>
        </authorList>
    </citation>
    <scope>NUCLEOTIDE SEQUENCE [LARGE SCALE GENOMIC DNA]</scope>
    <source>
        <strain>CMCP6</strain>
    </source>
</reference>